<reference key="1">
    <citation type="journal article" date="2009" name="Mol. Plant Microbe Interact.">
        <title>Structural and functional diversity of CLAVATA3/ESR (CLE)-like genes from the potato cyst nematode Globodera rostochiensis.</title>
        <authorList>
            <person name="Lu S.-W."/>
            <person name="Chen S."/>
            <person name="Wang J."/>
            <person name="Yu H."/>
            <person name="Chronis D."/>
            <person name="Mitchum M.G."/>
            <person name="Wang X."/>
        </authorList>
    </citation>
    <scope>NUCLEOTIDE SEQUENCE [GENOMIC DNA / MRNA]</scope>
    <scope>FUNCTION</scope>
    <scope>TISSUE SPECIFICITY</scope>
    <scope>DEVELOPMENTAL STAGE</scope>
</reference>
<gene>
    <name type="primary">CLE-4A-2</name>
</gene>
<dbReference type="EMBL" id="EU386832">
    <property type="protein sequence ID" value="ACY70451.1"/>
    <property type="molecule type" value="mRNA"/>
</dbReference>
<dbReference type="EMBL" id="EU386839">
    <property type="protein sequence ID" value="ACY70458.1"/>
    <property type="molecule type" value="Genomic_DNA"/>
</dbReference>
<dbReference type="GlyCosmos" id="D1FNK0">
    <property type="glycosylation" value="1 site, No reported glycans"/>
</dbReference>
<dbReference type="Proteomes" id="UP000887572">
    <property type="component" value="Unplaced"/>
</dbReference>
<dbReference type="GO" id="GO:0005576">
    <property type="term" value="C:extracellular region"/>
    <property type="evidence" value="ECO:0007669"/>
    <property type="project" value="UniProtKB-SubCell"/>
</dbReference>
<dbReference type="GO" id="GO:0030430">
    <property type="term" value="C:host cell cytoplasm"/>
    <property type="evidence" value="ECO:0007669"/>
    <property type="project" value="UniProtKB-SubCell"/>
</dbReference>
<dbReference type="GO" id="GO:0043655">
    <property type="term" value="C:host extracellular space"/>
    <property type="evidence" value="ECO:0007669"/>
    <property type="project" value="UniProtKB-SubCell"/>
</dbReference>
<dbReference type="GO" id="GO:0033612">
    <property type="term" value="F:receptor serine/threonine kinase binding"/>
    <property type="evidence" value="ECO:0007669"/>
    <property type="project" value="InterPro"/>
</dbReference>
<dbReference type="GO" id="GO:0030154">
    <property type="term" value="P:cell differentiation"/>
    <property type="evidence" value="ECO:0007669"/>
    <property type="project" value="UniProtKB-KW"/>
</dbReference>
<dbReference type="InterPro" id="IPR044962">
    <property type="entry name" value="CLV3/ESR"/>
</dbReference>
<dbReference type="PANTHER" id="PTHR36349">
    <property type="entry name" value="PROTEIN CLAVATA 3"/>
    <property type="match status" value="1"/>
</dbReference>
<dbReference type="PANTHER" id="PTHR36349:SF2">
    <property type="entry name" value="PROTEIN CLAVATA 3"/>
    <property type="match status" value="1"/>
</dbReference>
<name>CL4A2_GLORO</name>
<protein>
    <recommendedName>
        <fullName>CLAVATA3/ESR (CLE)-related protein 4A-2</fullName>
    </recommendedName>
</protein>
<organism>
    <name type="scientific">Globodera rostochiensis</name>
    <name type="common">Golden nematode worm</name>
    <name type="synonym">Heterodera rostochiensis</name>
    <dbReference type="NCBI Taxonomy" id="31243"/>
    <lineage>
        <taxon>Eukaryota</taxon>
        <taxon>Metazoa</taxon>
        <taxon>Ecdysozoa</taxon>
        <taxon>Nematoda</taxon>
        <taxon>Chromadorea</taxon>
        <taxon>Rhabditida</taxon>
        <taxon>Tylenchina</taxon>
        <taxon>Tylenchomorpha</taxon>
        <taxon>Tylenchoidea</taxon>
        <taxon>Heteroderidae</taxon>
        <taxon>Heteroderinae</taxon>
        <taxon>Globodera</taxon>
    </lineage>
</organism>
<comment type="function">
    <text evidence="5">Mimics host plant CLE extracellular signal peptides that regulate cell fate. May play a role in the differentiation or division of feeding cells (syncytia) induced in plant roots during infection.</text>
</comment>
<comment type="subcellular location">
    <subcellularLocation>
        <location evidence="1">Secreted</location>
    </subcellularLocation>
    <subcellularLocation>
        <location evidence="1">Host cytoplasm</location>
    </subcellularLocation>
    <subcellularLocation>
        <location evidence="1">Host extracellular space</location>
    </subcellularLocation>
    <subcellularLocation>
        <location evidence="1">Secreted</location>
        <location evidence="1">Extracellular space</location>
        <location evidence="1">Apoplast</location>
    </subcellularLocation>
    <text evidence="1">Present in secretory granules within the dorsal esophageal gland secretory cell and in the dorsal gland ampulla (collecting reservoir) at the base of the nematode stylet. Secreted into host root cells via the nematode stylet to transform the recipient cells into enlarged multinucleate feeding cells called giant-cells or syncytia. Secreted to the host apoplasm from its cytoplasm via a plant secretory pathway (By similarity).</text>
</comment>
<comment type="tissue specificity">
    <text evidence="5">Highly expressed exclusively within the dorsal esophageal gland cell during syncytium formation in host plants.</text>
</comment>
<comment type="developmental stage">
    <text evidence="5">Strongly up-regulated during root colonization, from the onset of syncytium formation by parasitic second-stage juveniles (pJ2) through the J3?J4 molts of sedentary life stages that become adult females.</text>
</comment>
<comment type="similarity">
    <text evidence="6">Belongs to the CLV3/ESR signal peptide family.</text>
</comment>
<accession>D1FNK0</accession>
<keyword id="KW-0052">Apoplast</keyword>
<keyword id="KW-0221">Differentiation</keyword>
<keyword id="KW-0325">Glycoprotein</keyword>
<keyword id="KW-1035">Host cytoplasm</keyword>
<keyword id="KW-1185">Reference proteome</keyword>
<keyword id="KW-0677">Repeat</keyword>
<keyword id="KW-0964">Secreted</keyword>
<keyword id="KW-0732">Signal</keyword>
<sequence length="252" mass="27611">MAKNAMLCLLILRVVLALAFATNKKGDEEPENHSTGIFGKVGRVVTVALAMSSRLGGADATRGGGAVYGGNLKSNQLPNNNWMAPPPPMAMRSAKVYDSKHSPAEYLKKFAQDFRRKTGMHSQRHHEETTLEQEKRVAGAGPDPIHHQDTTLEQEKRAVPAGPDPKHHEETTLEQEKRVAGAGPDPIHHQDTTLEQEKRAVPAGPDPTHHEETTLEQEKRAVPAGPDPKHHEETTFEQEKRGAPAGPDPIHH</sequence>
<evidence type="ECO:0000250" key="1"/>
<evidence type="ECO:0000255" key="2"/>
<evidence type="ECO:0000255" key="3">
    <source>
        <dbReference type="PROSITE-ProRule" id="PRU00498"/>
    </source>
</evidence>
<evidence type="ECO:0000256" key="4">
    <source>
        <dbReference type="SAM" id="MobiDB-lite"/>
    </source>
</evidence>
<evidence type="ECO:0000269" key="5">
    <source>
    </source>
</evidence>
<evidence type="ECO:0000305" key="6"/>
<proteinExistence type="evidence at transcript level"/>
<feature type="signal peptide" evidence="2">
    <location>
        <begin position="1"/>
        <end position="21"/>
    </location>
</feature>
<feature type="chain" id="PRO_5000539261" description="CLAVATA3/ESR (CLE)-related protein 4A-2" evidence="2">
    <location>
        <begin position="22"/>
        <end position="252"/>
    </location>
</feature>
<feature type="repeat" description="A-1">
    <location>
        <begin position="127"/>
        <end position="135"/>
    </location>
</feature>
<feature type="repeat" description="CLE-1">
    <location>
        <begin position="136"/>
        <end position="147"/>
    </location>
</feature>
<feature type="repeat" description="A-2">
    <location>
        <begin position="148"/>
        <end position="156"/>
    </location>
</feature>
<feature type="repeat" description="CLE-2">
    <location>
        <begin position="157"/>
        <end position="168"/>
    </location>
</feature>
<feature type="repeat" description="A-3">
    <location>
        <begin position="169"/>
        <end position="177"/>
    </location>
</feature>
<feature type="repeat" description="CLE-3">
    <location>
        <begin position="178"/>
        <end position="189"/>
    </location>
</feature>
<feature type="repeat" description="A-4">
    <location>
        <begin position="190"/>
        <end position="198"/>
    </location>
</feature>
<feature type="repeat" description="CLE-4">
    <location>
        <begin position="199"/>
        <end position="210"/>
    </location>
</feature>
<feature type="repeat" description="A-5">
    <location>
        <begin position="211"/>
        <end position="219"/>
    </location>
</feature>
<feature type="repeat" description="CLE-5">
    <location>
        <begin position="220"/>
        <end position="231"/>
    </location>
</feature>
<feature type="repeat" description="A-6">
    <location>
        <begin position="232"/>
        <end position="240"/>
    </location>
</feature>
<feature type="repeat" description="CLE-6">
    <location>
        <begin position="241"/>
        <end position="252"/>
    </location>
</feature>
<feature type="region of interest" description="Required for secretion from the host cytoplasm to the host apoplasm" evidence="1">
    <location>
        <begin position="21"/>
        <end position="83"/>
    </location>
</feature>
<feature type="region of interest" description="Disordered" evidence="4">
    <location>
        <begin position="116"/>
        <end position="252"/>
    </location>
</feature>
<feature type="region of interest" description="6 X approximate repeat A">
    <location>
        <begin position="127"/>
        <end position="219"/>
    </location>
</feature>
<feature type="region of interest" description="6 X approximate repeat CLE">
    <location>
        <begin position="136"/>
        <end position="252"/>
    </location>
</feature>
<feature type="compositionally biased region" description="Basic and acidic residues" evidence="4">
    <location>
        <begin position="125"/>
        <end position="137"/>
    </location>
</feature>
<feature type="compositionally biased region" description="Basic and acidic residues" evidence="4">
    <location>
        <begin position="144"/>
        <end position="179"/>
    </location>
</feature>
<feature type="compositionally biased region" description="Basic and acidic residues" evidence="4">
    <location>
        <begin position="186"/>
        <end position="200"/>
    </location>
</feature>
<feature type="compositionally biased region" description="Basic and acidic residues" evidence="4">
    <location>
        <begin position="207"/>
        <end position="242"/>
    </location>
</feature>
<feature type="glycosylation site" description="N-linked (GlcNAc...) asparagine" evidence="3">
    <location>
        <position position="32"/>
    </location>
</feature>